<gene>
    <name type="primary">rps4</name>
</gene>
<geneLocation type="chloroplast"/>
<sequence length="201" mass="23343">MSRYRGPRFKKIRRLGALPGLTSKRPTPGSDLRNQSRSGKRSQYRIRLEEKQKLRFHYGLTERQLLKYVRIAGKAKGSTGQVLLQLLEMRLDNILFRLGMASTIPGARQLVNHRHILVNGRIVDIPSYRCKPRDIITTRDEQKSRALIQNYLDSSPHEELPKHLTLHSSQYKGLVNQIIDSKWVGLKINELLVVEYYSRQT</sequence>
<reference key="1">
    <citation type="journal article" date="2006" name="BMC Plant Biol.">
        <title>Rapid and accurate pyrosequencing of angiosperm plastid genomes.</title>
        <authorList>
            <person name="Moore M.J."/>
            <person name="Dhingra A."/>
            <person name="Soltis P.S."/>
            <person name="Shaw R."/>
            <person name="Farmerie W.G."/>
            <person name="Folta K.M."/>
            <person name="Soltis D.E."/>
        </authorList>
    </citation>
    <scope>NUCLEOTIDE SEQUENCE [LARGE SCALE GENOMIC DNA]</scope>
</reference>
<accession>Q09FV9</accession>
<dbReference type="EMBL" id="DQ923117">
    <property type="protein sequence ID" value="ABI49865.1"/>
    <property type="molecule type" value="Genomic_DNA"/>
</dbReference>
<dbReference type="RefSeq" id="YP_740652.1">
    <property type="nucleotide sequence ID" value="NC_008336.1"/>
</dbReference>
<dbReference type="SMR" id="Q09FV9"/>
<dbReference type="GeneID" id="4271626"/>
<dbReference type="GO" id="GO:0009507">
    <property type="term" value="C:chloroplast"/>
    <property type="evidence" value="ECO:0007669"/>
    <property type="project" value="UniProtKB-SubCell"/>
</dbReference>
<dbReference type="GO" id="GO:0015935">
    <property type="term" value="C:small ribosomal subunit"/>
    <property type="evidence" value="ECO:0007669"/>
    <property type="project" value="InterPro"/>
</dbReference>
<dbReference type="GO" id="GO:0019843">
    <property type="term" value="F:rRNA binding"/>
    <property type="evidence" value="ECO:0007669"/>
    <property type="project" value="UniProtKB-UniRule"/>
</dbReference>
<dbReference type="GO" id="GO:0003735">
    <property type="term" value="F:structural constituent of ribosome"/>
    <property type="evidence" value="ECO:0007669"/>
    <property type="project" value="InterPro"/>
</dbReference>
<dbReference type="GO" id="GO:0042274">
    <property type="term" value="P:ribosomal small subunit biogenesis"/>
    <property type="evidence" value="ECO:0007669"/>
    <property type="project" value="TreeGrafter"/>
</dbReference>
<dbReference type="GO" id="GO:0006412">
    <property type="term" value="P:translation"/>
    <property type="evidence" value="ECO:0007669"/>
    <property type="project" value="UniProtKB-UniRule"/>
</dbReference>
<dbReference type="CDD" id="cd00165">
    <property type="entry name" value="S4"/>
    <property type="match status" value="1"/>
</dbReference>
<dbReference type="FunFam" id="1.10.1050.10:FF:000002">
    <property type="entry name" value="30S ribosomal protein S4, chloroplastic"/>
    <property type="match status" value="1"/>
</dbReference>
<dbReference type="FunFam" id="3.10.290.10:FF:000081">
    <property type="entry name" value="30S ribosomal protein S4, chloroplastic"/>
    <property type="match status" value="1"/>
</dbReference>
<dbReference type="Gene3D" id="1.10.1050.10">
    <property type="entry name" value="Ribosomal Protein S4 Delta 41, Chain A, domain 1"/>
    <property type="match status" value="1"/>
</dbReference>
<dbReference type="Gene3D" id="3.10.290.10">
    <property type="entry name" value="RNA-binding S4 domain"/>
    <property type="match status" value="1"/>
</dbReference>
<dbReference type="HAMAP" id="MF_01306_B">
    <property type="entry name" value="Ribosomal_uS4_B"/>
    <property type="match status" value="1"/>
</dbReference>
<dbReference type="InterPro" id="IPR022801">
    <property type="entry name" value="Ribosomal_uS4"/>
</dbReference>
<dbReference type="InterPro" id="IPR005709">
    <property type="entry name" value="Ribosomal_uS4_bac-type"/>
</dbReference>
<dbReference type="InterPro" id="IPR018079">
    <property type="entry name" value="Ribosomal_uS4_CS"/>
</dbReference>
<dbReference type="InterPro" id="IPR001912">
    <property type="entry name" value="Ribosomal_uS4_N"/>
</dbReference>
<dbReference type="InterPro" id="IPR002942">
    <property type="entry name" value="S4_RNA-bd"/>
</dbReference>
<dbReference type="InterPro" id="IPR036986">
    <property type="entry name" value="S4_RNA-bd_sf"/>
</dbReference>
<dbReference type="NCBIfam" id="NF003717">
    <property type="entry name" value="PRK05327.1"/>
    <property type="match status" value="1"/>
</dbReference>
<dbReference type="NCBIfam" id="TIGR01017">
    <property type="entry name" value="rpsD_bact"/>
    <property type="match status" value="1"/>
</dbReference>
<dbReference type="PANTHER" id="PTHR11831">
    <property type="entry name" value="30S 40S RIBOSOMAL PROTEIN"/>
    <property type="match status" value="1"/>
</dbReference>
<dbReference type="PANTHER" id="PTHR11831:SF4">
    <property type="entry name" value="SMALL RIBOSOMAL SUBUNIT PROTEIN US4M"/>
    <property type="match status" value="1"/>
</dbReference>
<dbReference type="Pfam" id="PF00163">
    <property type="entry name" value="Ribosomal_S4"/>
    <property type="match status" value="1"/>
</dbReference>
<dbReference type="Pfam" id="PF01479">
    <property type="entry name" value="S4"/>
    <property type="match status" value="1"/>
</dbReference>
<dbReference type="SMART" id="SM01390">
    <property type="entry name" value="Ribosomal_S4"/>
    <property type="match status" value="1"/>
</dbReference>
<dbReference type="SMART" id="SM00363">
    <property type="entry name" value="S4"/>
    <property type="match status" value="1"/>
</dbReference>
<dbReference type="SUPFAM" id="SSF55174">
    <property type="entry name" value="Alpha-L RNA-binding motif"/>
    <property type="match status" value="1"/>
</dbReference>
<dbReference type="PROSITE" id="PS00632">
    <property type="entry name" value="RIBOSOMAL_S4"/>
    <property type="match status" value="1"/>
</dbReference>
<dbReference type="PROSITE" id="PS50889">
    <property type="entry name" value="S4"/>
    <property type="match status" value="1"/>
</dbReference>
<feature type="chain" id="PRO_0000293431" description="Small ribosomal subunit protein uS4c">
    <location>
        <begin position="1"/>
        <end position="201"/>
    </location>
</feature>
<feature type="domain" description="S4 RNA-binding">
    <location>
        <begin position="89"/>
        <end position="149"/>
    </location>
</feature>
<feature type="region of interest" description="Disordered" evidence="2">
    <location>
        <begin position="15"/>
        <end position="43"/>
    </location>
</feature>
<name>RR4_NANDO</name>
<comment type="function">
    <text evidence="1">One of the primary rRNA binding proteins, it binds directly to 16S rRNA where it nucleates assembly of the body of the 30S subunit.</text>
</comment>
<comment type="function">
    <text evidence="1">With S5 and S12 plays an important role in translational accuracy.</text>
</comment>
<comment type="subunit">
    <text evidence="1">Part of the 30S ribosomal subunit. Contacts protein S5. The interaction surface between S4 and S5 is involved in control of translational fidelity (By similarity).</text>
</comment>
<comment type="subcellular location">
    <subcellularLocation>
        <location>Plastid</location>
        <location>Chloroplast</location>
    </subcellularLocation>
</comment>
<comment type="similarity">
    <text evidence="3">Belongs to the universal ribosomal protein uS4 family.</text>
</comment>
<proteinExistence type="inferred from homology"/>
<evidence type="ECO:0000250" key="1"/>
<evidence type="ECO:0000256" key="2">
    <source>
        <dbReference type="SAM" id="MobiDB-lite"/>
    </source>
</evidence>
<evidence type="ECO:0000305" key="3"/>
<keyword id="KW-0150">Chloroplast</keyword>
<keyword id="KW-0934">Plastid</keyword>
<keyword id="KW-0687">Ribonucleoprotein</keyword>
<keyword id="KW-0689">Ribosomal protein</keyword>
<keyword id="KW-0694">RNA-binding</keyword>
<keyword id="KW-0699">rRNA-binding</keyword>
<organism>
    <name type="scientific">Nandina domestica</name>
    <name type="common">Heavenly bamboo</name>
    <dbReference type="NCBI Taxonomy" id="41776"/>
    <lineage>
        <taxon>Eukaryota</taxon>
        <taxon>Viridiplantae</taxon>
        <taxon>Streptophyta</taxon>
        <taxon>Embryophyta</taxon>
        <taxon>Tracheophyta</taxon>
        <taxon>Spermatophyta</taxon>
        <taxon>Magnoliopsida</taxon>
        <taxon>Ranunculales</taxon>
        <taxon>Berberidaceae</taxon>
        <taxon>Nandinoideae</taxon>
        <taxon>Nandineae</taxon>
        <taxon>Nandina</taxon>
    </lineage>
</organism>
<protein>
    <recommendedName>
        <fullName evidence="3">Small ribosomal subunit protein uS4c</fullName>
    </recommendedName>
    <alternativeName>
        <fullName>30S ribosomal protein S4, chloroplastic</fullName>
    </alternativeName>
</protein>